<protein>
    <recommendedName>
        <fullName evidence="1">6-phosphogluconolactonase</fullName>
        <shortName evidence="1">6-P-gluconolactonase</shortName>
        <ecNumber evidence="1">3.1.1.31</ecNumber>
    </recommendedName>
</protein>
<keyword id="KW-0007">Acetylation</keyword>
<keyword id="KW-0119">Carbohydrate metabolism</keyword>
<keyword id="KW-0313">Glucose metabolism</keyword>
<keyword id="KW-0378">Hydrolase</keyword>
<proteinExistence type="inferred from homology"/>
<gene>
    <name evidence="1" type="primary">pgl</name>
    <name type="ordered locus">ECUMN_0852</name>
</gene>
<feature type="chain" id="PRO_1000148155" description="6-phosphogluconolactonase">
    <location>
        <begin position="1"/>
        <end position="331"/>
    </location>
</feature>
<feature type="modified residue" description="N6-acetyllysine" evidence="1">
    <location>
        <position position="287"/>
    </location>
</feature>
<reference key="1">
    <citation type="journal article" date="2009" name="PLoS Genet.">
        <title>Organised genome dynamics in the Escherichia coli species results in highly diverse adaptive paths.</title>
        <authorList>
            <person name="Touchon M."/>
            <person name="Hoede C."/>
            <person name="Tenaillon O."/>
            <person name="Barbe V."/>
            <person name="Baeriswyl S."/>
            <person name="Bidet P."/>
            <person name="Bingen E."/>
            <person name="Bonacorsi S."/>
            <person name="Bouchier C."/>
            <person name="Bouvet O."/>
            <person name="Calteau A."/>
            <person name="Chiapello H."/>
            <person name="Clermont O."/>
            <person name="Cruveiller S."/>
            <person name="Danchin A."/>
            <person name="Diard M."/>
            <person name="Dossat C."/>
            <person name="Karoui M.E."/>
            <person name="Frapy E."/>
            <person name="Garry L."/>
            <person name="Ghigo J.M."/>
            <person name="Gilles A.M."/>
            <person name="Johnson J."/>
            <person name="Le Bouguenec C."/>
            <person name="Lescat M."/>
            <person name="Mangenot S."/>
            <person name="Martinez-Jehanne V."/>
            <person name="Matic I."/>
            <person name="Nassif X."/>
            <person name="Oztas S."/>
            <person name="Petit M.A."/>
            <person name="Pichon C."/>
            <person name="Rouy Z."/>
            <person name="Ruf C.S."/>
            <person name="Schneider D."/>
            <person name="Tourret J."/>
            <person name="Vacherie B."/>
            <person name="Vallenet D."/>
            <person name="Medigue C."/>
            <person name="Rocha E.P.C."/>
            <person name="Denamur E."/>
        </authorList>
    </citation>
    <scope>NUCLEOTIDE SEQUENCE [LARGE SCALE GENOMIC DNA]</scope>
    <source>
        <strain>UMN026 / ExPEC</strain>
    </source>
</reference>
<name>6PGL_ECOLU</name>
<accession>B7NA10</accession>
<sequence>MKQTVYIASPESQQIHVWNLNHEGALTLTQVVDVPGQVQPMVVSPDKRYLYVGVRPEFRVLAYRIAPDDGALTFAAESALPGSPTHISTDHQGQFVFVGSYNAGNVSVTRLEDGLPVGVVDVVEGLDGCHSANISPDNRTLWVPALKQDRICLFTVSDDGHLVAQDPAEVTTVEGAGPRHMVFHPNEQYAYCVNELNSSVDVWELKDPHGNIECVQTLDMMPENFSDTRWAADIHITPDGRHLYACDRTASLITVFSVSEDGSVLSKEGFQPTETQPRGFNVDHSGKYLIAAGQKSHHISVYEIVGEQGLLHEKGRYAVGQGPMWVVVNAH</sequence>
<dbReference type="EC" id="3.1.1.31" evidence="1"/>
<dbReference type="EMBL" id="CU928163">
    <property type="protein sequence ID" value="CAR12061.1"/>
    <property type="molecule type" value="Genomic_DNA"/>
</dbReference>
<dbReference type="RefSeq" id="WP_000815435.1">
    <property type="nucleotide sequence ID" value="NC_011751.1"/>
</dbReference>
<dbReference type="RefSeq" id="YP_002411607.1">
    <property type="nucleotide sequence ID" value="NC_011751.1"/>
</dbReference>
<dbReference type="SMR" id="B7NA10"/>
<dbReference type="STRING" id="585056.ECUMN_0852"/>
<dbReference type="GeneID" id="86945650"/>
<dbReference type="KEGG" id="eum:ECUMN_0852"/>
<dbReference type="PATRIC" id="fig|585056.7.peg.1052"/>
<dbReference type="HOGENOM" id="CLU_038716_2_0_6"/>
<dbReference type="UniPathway" id="UPA00115">
    <property type="reaction ID" value="UER00409"/>
</dbReference>
<dbReference type="Proteomes" id="UP000007097">
    <property type="component" value="Chromosome"/>
</dbReference>
<dbReference type="GO" id="GO:0005829">
    <property type="term" value="C:cytosol"/>
    <property type="evidence" value="ECO:0007669"/>
    <property type="project" value="TreeGrafter"/>
</dbReference>
<dbReference type="GO" id="GO:0017057">
    <property type="term" value="F:6-phosphogluconolactonase activity"/>
    <property type="evidence" value="ECO:0007669"/>
    <property type="project" value="UniProtKB-UniRule"/>
</dbReference>
<dbReference type="GO" id="GO:0006006">
    <property type="term" value="P:glucose metabolic process"/>
    <property type="evidence" value="ECO:0007669"/>
    <property type="project" value="UniProtKB-KW"/>
</dbReference>
<dbReference type="GO" id="GO:0009051">
    <property type="term" value="P:pentose-phosphate shunt, oxidative branch"/>
    <property type="evidence" value="ECO:0007669"/>
    <property type="project" value="UniProtKB-UniRule"/>
</dbReference>
<dbReference type="FunFam" id="2.130.10.10:FF:000051">
    <property type="entry name" value="6-phosphogluconolactonase"/>
    <property type="match status" value="1"/>
</dbReference>
<dbReference type="Gene3D" id="2.130.10.10">
    <property type="entry name" value="YVTN repeat-like/Quinoprotein amine dehydrogenase"/>
    <property type="match status" value="1"/>
</dbReference>
<dbReference type="HAMAP" id="MF_01605">
    <property type="entry name" value="6P_gluconolactonase"/>
    <property type="match status" value="1"/>
</dbReference>
<dbReference type="InterPro" id="IPR022528">
    <property type="entry name" value="6-phosphogluconolactonase_YbhE"/>
</dbReference>
<dbReference type="InterPro" id="IPR050282">
    <property type="entry name" value="Cycloisomerase_2"/>
</dbReference>
<dbReference type="InterPro" id="IPR019405">
    <property type="entry name" value="Lactonase_7-beta_prop"/>
</dbReference>
<dbReference type="InterPro" id="IPR011045">
    <property type="entry name" value="N2O_reductase_N"/>
</dbReference>
<dbReference type="InterPro" id="IPR015943">
    <property type="entry name" value="WD40/YVTN_repeat-like_dom_sf"/>
</dbReference>
<dbReference type="NCBIfam" id="NF008258">
    <property type="entry name" value="PRK11028.1"/>
    <property type="match status" value="1"/>
</dbReference>
<dbReference type="PANTHER" id="PTHR30344:SF1">
    <property type="entry name" value="6-PHOSPHOGLUCONOLACTONASE"/>
    <property type="match status" value="1"/>
</dbReference>
<dbReference type="PANTHER" id="PTHR30344">
    <property type="entry name" value="6-PHOSPHOGLUCONOLACTONASE-RELATED"/>
    <property type="match status" value="1"/>
</dbReference>
<dbReference type="Pfam" id="PF10282">
    <property type="entry name" value="Lactonase"/>
    <property type="match status" value="1"/>
</dbReference>
<dbReference type="SUPFAM" id="SSF50974">
    <property type="entry name" value="Nitrous oxide reductase, N-terminal domain"/>
    <property type="match status" value="1"/>
</dbReference>
<organism>
    <name type="scientific">Escherichia coli O17:K52:H18 (strain UMN026 / ExPEC)</name>
    <dbReference type="NCBI Taxonomy" id="585056"/>
    <lineage>
        <taxon>Bacteria</taxon>
        <taxon>Pseudomonadati</taxon>
        <taxon>Pseudomonadota</taxon>
        <taxon>Gammaproteobacteria</taxon>
        <taxon>Enterobacterales</taxon>
        <taxon>Enterobacteriaceae</taxon>
        <taxon>Escherichia</taxon>
    </lineage>
</organism>
<comment type="function">
    <text evidence="1">Catalyzes the hydrolysis of 6-phosphogluconolactone to 6-phosphogluconate.</text>
</comment>
<comment type="catalytic activity">
    <reaction evidence="1">
        <text>6-phospho-D-glucono-1,5-lactone + H2O = 6-phospho-D-gluconate + H(+)</text>
        <dbReference type="Rhea" id="RHEA:12556"/>
        <dbReference type="ChEBI" id="CHEBI:15377"/>
        <dbReference type="ChEBI" id="CHEBI:15378"/>
        <dbReference type="ChEBI" id="CHEBI:57955"/>
        <dbReference type="ChEBI" id="CHEBI:58759"/>
        <dbReference type="EC" id="3.1.1.31"/>
    </reaction>
</comment>
<comment type="pathway">
    <text evidence="1">Carbohydrate degradation; pentose phosphate pathway; D-ribulose 5-phosphate from D-glucose 6-phosphate (oxidative stage): step 2/3.</text>
</comment>
<comment type="similarity">
    <text evidence="1">Belongs to the cycloisomerase 2 family.</text>
</comment>
<evidence type="ECO:0000255" key="1">
    <source>
        <dbReference type="HAMAP-Rule" id="MF_01605"/>
    </source>
</evidence>